<comment type="function">
    <text evidence="1">Involved in urease metallocenter assembly. Binds nickel. Probably functions as a nickel donor during metallocenter assembly.</text>
</comment>
<comment type="subcellular location">
    <subcellularLocation>
        <location evidence="1">Cytoplasm</location>
    </subcellularLocation>
</comment>
<comment type="similarity">
    <text evidence="1">Belongs to the UreE family.</text>
</comment>
<organism>
    <name type="scientific">Staphylococcus aureus (strain MSSA476)</name>
    <dbReference type="NCBI Taxonomy" id="282459"/>
    <lineage>
        <taxon>Bacteria</taxon>
        <taxon>Bacillati</taxon>
        <taxon>Bacillota</taxon>
        <taxon>Bacilli</taxon>
        <taxon>Bacillales</taxon>
        <taxon>Staphylococcaceae</taxon>
        <taxon>Staphylococcus</taxon>
    </lineage>
</organism>
<accession>Q6G731</accession>
<keyword id="KW-0143">Chaperone</keyword>
<keyword id="KW-0963">Cytoplasm</keyword>
<keyword id="KW-0533">Nickel</keyword>
<keyword id="KW-0996">Nickel insertion</keyword>
<feature type="chain" id="PRO_0000223439" description="Urease accessory protein UreE">
    <location>
        <begin position="1"/>
        <end position="150"/>
    </location>
</feature>
<sequence length="150" mass="17340">MIVEEIQGNIANLSNSEKQKHVEKVYLENSDLVKRIQRVVTDHGTEIGIRLKQPIDLQYGDILYADDHNMIIVDVNSEDLLVIQPRTLQEMGDIAHQLGNRHLPAQFTETEMLVQYDYLVEDLLKSLGIPYVREDRKVNKAFRHIGHSHD</sequence>
<reference key="1">
    <citation type="journal article" date="2004" name="Proc. Natl. Acad. Sci. U.S.A.">
        <title>Complete genomes of two clinical Staphylococcus aureus strains: evidence for the rapid evolution of virulence and drug resistance.</title>
        <authorList>
            <person name="Holden M.T.G."/>
            <person name="Feil E.J."/>
            <person name="Lindsay J.A."/>
            <person name="Peacock S.J."/>
            <person name="Day N.P.J."/>
            <person name="Enright M.C."/>
            <person name="Foster T.J."/>
            <person name="Moore C.E."/>
            <person name="Hurst L."/>
            <person name="Atkin R."/>
            <person name="Barron A."/>
            <person name="Bason N."/>
            <person name="Bentley S.D."/>
            <person name="Chillingworth C."/>
            <person name="Chillingworth T."/>
            <person name="Churcher C."/>
            <person name="Clark L."/>
            <person name="Corton C."/>
            <person name="Cronin A."/>
            <person name="Doggett J."/>
            <person name="Dowd L."/>
            <person name="Feltwell T."/>
            <person name="Hance Z."/>
            <person name="Harris B."/>
            <person name="Hauser H."/>
            <person name="Holroyd S."/>
            <person name="Jagels K."/>
            <person name="James K.D."/>
            <person name="Lennard N."/>
            <person name="Line A."/>
            <person name="Mayes R."/>
            <person name="Moule S."/>
            <person name="Mungall K."/>
            <person name="Ormond D."/>
            <person name="Quail M.A."/>
            <person name="Rabbinowitsch E."/>
            <person name="Rutherford K.M."/>
            <person name="Sanders M."/>
            <person name="Sharp S."/>
            <person name="Simmonds M."/>
            <person name="Stevens K."/>
            <person name="Whitehead S."/>
            <person name="Barrell B.G."/>
            <person name="Spratt B.G."/>
            <person name="Parkhill J."/>
        </authorList>
    </citation>
    <scope>NUCLEOTIDE SEQUENCE [LARGE SCALE GENOMIC DNA]</scope>
    <source>
        <strain>MSSA476</strain>
    </source>
</reference>
<proteinExistence type="inferred from homology"/>
<protein>
    <recommendedName>
        <fullName evidence="1">Urease accessory protein UreE</fullName>
    </recommendedName>
</protein>
<gene>
    <name evidence="1" type="primary">ureE</name>
    <name type="ordered locus">SAS2181</name>
</gene>
<dbReference type="EMBL" id="BX571857">
    <property type="protein sequence ID" value="CAG43992.1"/>
    <property type="molecule type" value="Genomic_DNA"/>
</dbReference>
<dbReference type="RefSeq" id="WP_000634589.1">
    <property type="nucleotide sequence ID" value="NC_002953.3"/>
</dbReference>
<dbReference type="SMR" id="Q6G731"/>
<dbReference type="KEGG" id="sas:SAS2181"/>
<dbReference type="HOGENOM" id="CLU_093757_3_1_9"/>
<dbReference type="GO" id="GO:0005737">
    <property type="term" value="C:cytoplasm"/>
    <property type="evidence" value="ECO:0007669"/>
    <property type="project" value="UniProtKB-SubCell"/>
</dbReference>
<dbReference type="GO" id="GO:0016151">
    <property type="term" value="F:nickel cation binding"/>
    <property type="evidence" value="ECO:0007669"/>
    <property type="project" value="UniProtKB-UniRule"/>
</dbReference>
<dbReference type="GO" id="GO:0051082">
    <property type="term" value="F:unfolded protein binding"/>
    <property type="evidence" value="ECO:0007669"/>
    <property type="project" value="UniProtKB-UniRule"/>
</dbReference>
<dbReference type="GO" id="GO:0006457">
    <property type="term" value="P:protein folding"/>
    <property type="evidence" value="ECO:0007669"/>
    <property type="project" value="InterPro"/>
</dbReference>
<dbReference type="GO" id="GO:0065003">
    <property type="term" value="P:protein-containing complex assembly"/>
    <property type="evidence" value="ECO:0007669"/>
    <property type="project" value="InterPro"/>
</dbReference>
<dbReference type="GO" id="GO:0019627">
    <property type="term" value="P:urea metabolic process"/>
    <property type="evidence" value="ECO:0007669"/>
    <property type="project" value="InterPro"/>
</dbReference>
<dbReference type="CDD" id="cd00571">
    <property type="entry name" value="UreE"/>
    <property type="match status" value="1"/>
</dbReference>
<dbReference type="Gene3D" id="2.60.260.20">
    <property type="entry name" value="Urease metallochaperone UreE, N-terminal domain"/>
    <property type="match status" value="1"/>
</dbReference>
<dbReference type="Gene3D" id="3.30.70.790">
    <property type="entry name" value="UreE, C-terminal domain"/>
    <property type="match status" value="1"/>
</dbReference>
<dbReference type="HAMAP" id="MF_00822">
    <property type="entry name" value="UreE"/>
    <property type="match status" value="1"/>
</dbReference>
<dbReference type="InterPro" id="IPR012406">
    <property type="entry name" value="UreE"/>
</dbReference>
<dbReference type="InterPro" id="IPR007864">
    <property type="entry name" value="UreE_C_dom"/>
</dbReference>
<dbReference type="InterPro" id="IPR004029">
    <property type="entry name" value="UreE_N"/>
</dbReference>
<dbReference type="InterPro" id="IPR036118">
    <property type="entry name" value="UreE_N_sf"/>
</dbReference>
<dbReference type="NCBIfam" id="NF009755">
    <property type="entry name" value="PRK13261.2-1"/>
    <property type="match status" value="1"/>
</dbReference>
<dbReference type="Pfam" id="PF05194">
    <property type="entry name" value="UreE_C"/>
    <property type="match status" value="1"/>
</dbReference>
<dbReference type="Pfam" id="PF02814">
    <property type="entry name" value="UreE_N"/>
    <property type="match status" value="1"/>
</dbReference>
<dbReference type="PIRSF" id="PIRSF036402">
    <property type="entry name" value="Ureas_acces_UreE"/>
    <property type="match status" value="1"/>
</dbReference>
<dbReference type="SMART" id="SM00988">
    <property type="entry name" value="UreE_N"/>
    <property type="match status" value="1"/>
</dbReference>
<dbReference type="SUPFAM" id="SSF69737">
    <property type="entry name" value="Urease metallochaperone UreE, C-terminal domain"/>
    <property type="match status" value="1"/>
</dbReference>
<dbReference type="SUPFAM" id="SSF69287">
    <property type="entry name" value="Urease metallochaperone UreE, N-terminal domain"/>
    <property type="match status" value="1"/>
</dbReference>
<evidence type="ECO:0000255" key="1">
    <source>
        <dbReference type="HAMAP-Rule" id="MF_00822"/>
    </source>
</evidence>
<name>UREE_STAAS</name>